<feature type="chain" id="PRO_1000140265" description="Type III pantothenate kinase">
    <location>
        <begin position="1"/>
        <end position="242"/>
    </location>
</feature>
<feature type="active site" description="Proton acceptor" evidence="1">
    <location>
        <position position="100"/>
    </location>
</feature>
<feature type="binding site" evidence="1">
    <location>
        <begin position="7"/>
        <end position="14"/>
    </location>
    <ligand>
        <name>ATP</name>
        <dbReference type="ChEBI" id="CHEBI:30616"/>
    </ligand>
</feature>
<feature type="binding site" evidence="1">
    <location>
        <position position="91"/>
    </location>
    <ligand>
        <name>substrate</name>
    </ligand>
</feature>
<feature type="binding site" evidence="1">
    <location>
        <begin position="98"/>
        <end position="101"/>
    </location>
    <ligand>
        <name>substrate</name>
    </ligand>
</feature>
<feature type="binding site" evidence="1">
    <location>
        <position position="121"/>
    </location>
    <ligand>
        <name>ATP</name>
        <dbReference type="ChEBI" id="CHEBI:30616"/>
    </ligand>
</feature>
<feature type="binding site" evidence="1">
    <location>
        <position position="171"/>
    </location>
    <ligand>
        <name>substrate</name>
    </ligand>
</feature>
<protein>
    <recommendedName>
        <fullName evidence="1">Type III pantothenate kinase</fullName>
        <ecNumber evidence="1">2.7.1.33</ecNumber>
    </recommendedName>
    <alternativeName>
        <fullName evidence="1">PanK-III</fullName>
    </alternativeName>
    <alternativeName>
        <fullName evidence="1">Pantothenic acid kinase</fullName>
    </alternativeName>
</protein>
<accession>B0RXV6</accession>
<gene>
    <name evidence="1" type="primary">coaX</name>
    <name type="ordered locus">xcc-b100_4123</name>
</gene>
<comment type="function">
    <text evidence="1">Catalyzes the phosphorylation of pantothenate (Pan), the first step in CoA biosynthesis.</text>
</comment>
<comment type="catalytic activity">
    <reaction evidence="1">
        <text>(R)-pantothenate + ATP = (R)-4'-phosphopantothenate + ADP + H(+)</text>
        <dbReference type="Rhea" id="RHEA:16373"/>
        <dbReference type="ChEBI" id="CHEBI:10986"/>
        <dbReference type="ChEBI" id="CHEBI:15378"/>
        <dbReference type="ChEBI" id="CHEBI:29032"/>
        <dbReference type="ChEBI" id="CHEBI:30616"/>
        <dbReference type="ChEBI" id="CHEBI:456216"/>
        <dbReference type="EC" id="2.7.1.33"/>
    </reaction>
</comment>
<comment type="cofactor">
    <cofactor evidence="1">
        <name>NH4(+)</name>
        <dbReference type="ChEBI" id="CHEBI:28938"/>
    </cofactor>
    <cofactor evidence="1">
        <name>K(+)</name>
        <dbReference type="ChEBI" id="CHEBI:29103"/>
    </cofactor>
    <text evidence="1">A monovalent cation. Ammonium or potassium.</text>
</comment>
<comment type="pathway">
    <text evidence="1">Cofactor biosynthesis; coenzyme A biosynthesis; CoA from (R)-pantothenate: step 1/5.</text>
</comment>
<comment type="subunit">
    <text evidence="1">Homodimer.</text>
</comment>
<comment type="subcellular location">
    <subcellularLocation>
        <location evidence="1">Cytoplasm</location>
    </subcellularLocation>
</comment>
<comment type="similarity">
    <text evidence="1">Belongs to the type III pantothenate kinase family.</text>
</comment>
<keyword id="KW-0067">ATP-binding</keyword>
<keyword id="KW-0173">Coenzyme A biosynthesis</keyword>
<keyword id="KW-0963">Cytoplasm</keyword>
<keyword id="KW-0418">Kinase</keyword>
<keyword id="KW-0547">Nucleotide-binding</keyword>
<keyword id="KW-0630">Potassium</keyword>
<keyword id="KW-0808">Transferase</keyword>
<organism>
    <name type="scientific">Xanthomonas campestris pv. campestris (strain B100)</name>
    <dbReference type="NCBI Taxonomy" id="509169"/>
    <lineage>
        <taxon>Bacteria</taxon>
        <taxon>Pseudomonadati</taxon>
        <taxon>Pseudomonadota</taxon>
        <taxon>Gammaproteobacteria</taxon>
        <taxon>Lysobacterales</taxon>
        <taxon>Lysobacteraceae</taxon>
        <taxon>Xanthomonas</taxon>
    </lineage>
</organism>
<name>COAX_XANCB</name>
<evidence type="ECO:0000255" key="1">
    <source>
        <dbReference type="HAMAP-Rule" id="MF_01274"/>
    </source>
</evidence>
<sequence>MSEWLFDLGNSRFKYAPLDGTRAGDVQAWAHGAEAMDTAALSALPSGKVAHVASVAAAGLTERVLASLRTRFEQVRVVRTAAACAGVRIAYADPSRFGVDRFLALLGARGDAPVLVAGVGTALTIDVLDADGQHHGGRIAASPTTMREALHARAVQLPPTGGAYAELANDTDDALTSGCDGAAVALIERSLQHAARTLGMPVRLLVHGGGAPPLLPLLPTAEFRAALVLDGLATWATHSAAP</sequence>
<reference key="1">
    <citation type="journal article" date="2008" name="J. Biotechnol.">
        <title>The genome of Xanthomonas campestris pv. campestris B100 and its use for the reconstruction of metabolic pathways involved in xanthan biosynthesis.</title>
        <authorList>
            <person name="Vorhoelter F.-J."/>
            <person name="Schneiker S."/>
            <person name="Goesmann A."/>
            <person name="Krause L."/>
            <person name="Bekel T."/>
            <person name="Kaiser O."/>
            <person name="Linke B."/>
            <person name="Patschkowski T."/>
            <person name="Rueckert C."/>
            <person name="Schmid J."/>
            <person name="Sidhu V.K."/>
            <person name="Sieber V."/>
            <person name="Tauch A."/>
            <person name="Watt S.A."/>
            <person name="Weisshaar B."/>
            <person name="Becker A."/>
            <person name="Niehaus K."/>
            <person name="Puehler A."/>
        </authorList>
    </citation>
    <scope>NUCLEOTIDE SEQUENCE [LARGE SCALE GENOMIC DNA]</scope>
    <source>
        <strain>B100</strain>
    </source>
</reference>
<proteinExistence type="inferred from homology"/>
<dbReference type="EC" id="2.7.1.33" evidence="1"/>
<dbReference type="EMBL" id="AM920689">
    <property type="protein sequence ID" value="CAP53492.1"/>
    <property type="molecule type" value="Genomic_DNA"/>
</dbReference>
<dbReference type="SMR" id="B0RXV6"/>
<dbReference type="KEGG" id="xca:xcc-b100_4123"/>
<dbReference type="HOGENOM" id="CLU_066627_0_0_6"/>
<dbReference type="UniPathway" id="UPA00241">
    <property type="reaction ID" value="UER00352"/>
</dbReference>
<dbReference type="Proteomes" id="UP000001188">
    <property type="component" value="Chromosome"/>
</dbReference>
<dbReference type="GO" id="GO:0005737">
    <property type="term" value="C:cytoplasm"/>
    <property type="evidence" value="ECO:0007669"/>
    <property type="project" value="UniProtKB-SubCell"/>
</dbReference>
<dbReference type="GO" id="GO:0005524">
    <property type="term" value="F:ATP binding"/>
    <property type="evidence" value="ECO:0007669"/>
    <property type="project" value="UniProtKB-UniRule"/>
</dbReference>
<dbReference type="GO" id="GO:0004594">
    <property type="term" value="F:pantothenate kinase activity"/>
    <property type="evidence" value="ECO:0007669"/>
    <property type="project" value="UniProtKB-UniRule"/>
</dbReference>
<dbReference type="GO" id="GO:0015937">
    <property type="term" value="P:coenzyme A biosynthetic process"/>
    <property type="evidence" value="ECO:0007669"/>
    <property type="project" value="UniProtKB-UniRule"/>
</dbReference>
<dbReference type="CDD" id="cd24015">
    <property type="entry name" value="ASKHA_NBD_PanK-III"/>
    <property type="match status" value="1"/>
</dbReference>
<dbReference type="Gene3D" id="3.30.420.40">
    <property type="match status" value="2"/>
</dbReference>
<dbReference type="HAMAP" id="MF_01274">
    <property type="entry name" value="Pantothen_kinase_3"/>
    <property type="match status" value="1"/>
</dbReference>
<dbReference type="InterPro" id="IPR043129">
    <property type="entry name" value="ATPase_NBD"/>
</dbReference>
<dbReference type="InterPro" id="IPR004619">
    <property type="entry name" value="Type_III_PanK"/>
</dbReference>
<dbReference type="NCBIfam" id="TIGR00671">
    <property type="entry name" value="baf"/>
    <property type="match status" value="1"/>
</dbReference>
<dbReference type="NCBIfam" id="NF009864">
    <property type="entry name" value="PRK13327.1"/>
    <property type="match status" value="1"/>
</dbReference>
<dbReference type="PANTHER" id="PTHR34265">
    <property type="entry name" value="TYPE III PANTOTHENATE KINASE"/>
    <property type="match status" value="1"/>
</dbReference>
<dbReference type="PANTHER" id="PTHR34265:SF1">
    <property type="entry name" value="TYPE III PANTOTHENATE KINASE"/>
    <property type="match status" value="1"/>
</dbReference>
<dbReference type="Pfam" id="PF03309">
    <property type="entry name" value="Pan_kinase"/>
    <property type="match status" value="1"/>
</dbReference>
<dbReference type="SUPFAM" id="SSF53067">
    <property type="entry name" value="Actin-like ATPase domain"/>
    <property type="match status" value="2"/>
</dbReference>